<dbReference type="EC" id="2.6.99.2" evidence="1"/>
<dbReference type="EMBL" id="CP000890">
    <property type="protein sequence ID" value="ABX77722.1"/>
    <property type="molecule type" value="Genomic_DNA"/>
</dbReference>
<dbReference type="SMR" id="A9N936"/>
<dbReference type="KEGG" id="cbs:COXBURSA331_A1678"/>
<dbReference type="HOGENOM" id="CLU_074563_0_0_6"/>
<dbReference type="UniPathway" id="UPA00244">
    <property type="reaction ID" value="UER00313"/>
</dbReference>
<dbReference type="GO" id="GO:0005829">
    <property type="term" value="C:cytosol"/>
    <property type="evidence" value="ECO:0007669"/>
    <property type="project" value="TreeGrafter"/>
</dbReference>
<dbReference type="GO" id="GO:0033856">
    <property type="term" value="F:pyridoxine 5'-phosphate synthase activity"/>
    <property type="evidence" value="ECO:0007669"/>
    <property type="project" value="UniProtKB-EC"/>
</dbReference>
<dbReference type="GO" id="GO:0008615">
    <property type="term" value="P:pyridoxine biosynthetic process"/>
    <property type="evidence" value="ECO:0007669"/>
    <property type="project" value="UniProtKB-UniRule"/>
</dbReference>
<dbReference type="CDD" id="cd00003">
    <property type="entry name" value="PNPsynthase"/>
    <property type="match status" value="1"/>
</dbReference>
<dbReference type="FunFam" id="3.20.20.70:FF:000042">
    <property type="entry name" value="Pyridoxine 5'-phosphate synthase"/>
    <property type="match status" value="1"/>
</dbReference>
<dbReference type="Gene3D" id="3.20.20.70">
    <property type="entry name" value="Aldolase class I"/>
    <property type="match status" value="1"/>
</dbReference>
<dbReference type="HAMAP" id="MF_00279">
    <property type="entry name" value="PdxJ"/>
    <property type="match status" value="1"/>
</dbReference>
<dbReference type="InterPro" id="IPR013785">
    <property type="entry name" value="Aldolase_TIM"/>
</dbReference>
<dbReference type="InterPro" id="IPR004569">
    <property type="entry name" value="PyrdxlP_synth_PdxJ"/>
</dbReference>
<dbReference type="InterPro" id="IPR036130">
    <property type="entry name" value="Pyridoxine-5'_phos_synth"/>
</dbReference>
<dbReference type="NCBIfam" id="TIGR00559">
    <property type="entry name" value="pdxJ"/>
    <property type="match status" value="1"/>
</dbReference>
<dbReference type="NCBIfam" id="NF003623">
    <property type="entry name" value="PRK05265.1-1"/>
    <property type="match status" value="1"/>
</dbReference>
<dbReference type="NCBIfam" id="NF003624">
    <property type="entry name" value="PRK05265.1-2"/>
    <property type="match status" value="1"/>
</dbReference>
<dbReference type="NCBIfam" id="NF003625">
    <property type="entry name" value="PRK05265.1-3"/>
    <property type="match status" value="1"/>
</dbReference>
<dbReference type="NCBIfam" id="NF003626">
    <property type="entry name" value="PRK05265.1-4"/>
    <property type="match status" value="1"/>
</dbReference>
<dbReference type="NCBIfam" id="NF003627">
    <property type="entry name" value="PRK05265.1-5"/>
    <property type="match status" value="1"/>
</dbReference>
<dbReference type="PANTHER" id="PTHR30456">
    <property type="entry name" value="PYRIDOXINE 5'-PHOSPHATE SYNTHASE"/>
    <property type="match status" value="1"/>
</dbReference>
<dbReference type="PANTHER" id="PTHR30456:SF0">
    <property type="entry name" value="PYRIDOXINE 5'-PHOSPHATE SYNTHASE"/>
    <property type="match status" value="1"/>
</dbReference>
<dbReference type="Pfam" id="PF03740">
    <property type="entry name" value="PdxJ"/>
    <property type="match status" value="1"/>
</dbReference>
<dbReference type="SUPFAM" id="SSF63892">
    <property type="entry name" value="Pyridoxine 5'-phosphate synthase"/>
    <property type="match status" value="1"/>
</dbReference>
<protein>
    <recommendedName>
        <fullName evidence="1">Pyridoxine 5'-phosphate synthase</fullName>
        <shortName evidence="1">PNP synthase</shortName>
        <ecNumber evidence="1">2.6.99.2</ecNumber>
    </recommendedName>
</protein>
<sequence length="240" mass="26013">MVRLGVNIDHIATLRQARGVDYPDPVEAAMMAIEAGADGITLHLREDRRHIQDDDVRNLKRKLTVPMNLEMATAEDIIQFAEEIKPEHCCLVPEKREELTTEGGLDVAGQQNTLKKVCARLAKVGIEVSLFIDPEEKQIDAAKAAGAPVIEIHTGHYANAKTDHEHNQQLKRIADAAAYADSLGLTVNAGHGLTIHNVQSIAAIPVINELNIGHSIISRGVLIGLAEAVKEMKTLIAGAQ</sequence>
<reference key="1">
    <citation type="submission" date="2007-11" db="EMBL/GenBank/DDBJ databases">
        <title>Genome sequencing of phylogenetically and phenotypically diverse Coxiella burnetii isolates.</title>
        <authorList>
            <person name="Seshadri R."/>
            <person name="Samuel J.E."/>
        </authorList>
    </citation>
    <scope>NUCLEOTIDE SEQUENCE [LARGE SCALE GENOMIC DNA]</scope>
    <source>
        <strain>RSA 331 / Henzerling II</strain>
    </source>
</reference>
<accession>A9N936</accession>
<keyword id="KW-0963">Cytoplasm</keyword>
<keyword id="KW-0664">Pyridoxine biosynthesis</keyword>
<keyword id="KW-0808">Transferase</keyword>
<evidence type="ECO:0000255" key="1">
    <source>
        <dbReference type="HAMAP-Rule" id="MF_00279"/>
    </source>
</evidence>
<feature type="chain" id="PRO_1000078817" description="Pyridoxine 5'-phosphate synthase">
    <location>
        <begin position="1"/>
        <end position="240"/>
    </location>
</feature>
<feature type="active site" description="Proton acceptor" evidence="1">
    <location>
        <position position="43"/>
    </location>
</feature>
<feature type="active site" description="Proton acceptor" evidence="1">
    <location>
        <position position="70"/>
    </location>
</feature>
<feature type="active site" description="Proton donor" evidence="1">
    <location>
        <position position="191"/>
    </location>
</feature>
<feature type="binding site" evidence="1">
    <location>
        <position position="7"/>
    </location>
    <ligand>
        <name>3-amino-2-oxopropyl phosphate</name>
        <dbReference type="ChEBI" id="CHEBI:57279"/>
    </ligand>
</feature>
<feature type="binding site" evidence="1">
    <location>
        <begin position="9"/>
        <end position="10"/>
    </location>
    <ligand>
        <name>1-deoxy-D-xylulose 5-phosphate</name>
        <dbReference type="ChEBI" id="CHEBI:57792"/>
    </ligand>
</feature>
<feature type="binding site" evidence="1">
    <location>
        <position position="18"/>
    </location>
    <ligand>
        <name>3-amino-2-oxopropyl phosphate</name>
        <dbReference type="ChEBI" id="CHEBI:57279"/>
    </ligand>
</feature>
<feature type="binding site" evidence="1">
    <location>
        <position position="45"/>
    </location>
    <ligand>
        <name>1-deoxy-D-xylulose 5-phosphate</name>
        <dbReference type="ChEBI" id="CHEBI:57792"/>
    </ligand>
</feature>
<feature type="binding site" evidence="1">
    <location>
        <position position="50"/>
    </location>
    <ligand>
        <name>1-deoxy-D-xylulose 5-phosphate</name>
        <dbReference type="ChEBI" id="CHEBI:57792"/>
    </ligand>
</feature>
<feature type="binding site" evidence="1">
    <location>
        <position position="100"/>
    </location>
    <ligand>
        <name>1-deoxy-D-xylulose 5-phosphate</name>
        <dbReference type="ChEBI" id="CHEBI:57792"/>
    </ligand>
</feature>
<feature type="binding site" evidence="1">
    <location>
        <position position="192"/>
    </location>
    <ligand>
        <name>3-amino-2-oxopropyl phosphate</name>
        <dbReference type="ChEBI" id="CHEBI:57279"/>
    </ligand>
</feature>
<feature type="binding site" evidence="1">
    <location>
        <begin position="213"/>
        <end position="214"/>
    </location>
    <ligand>
        <name>3-amino-2-oxopropyl phosphate</name>
        <dbReference type="ChEBI" id="CHEBI:57279"/>
    </ligand>
</feature>
<feature type="site" description="Transition state stabilizer" evidence="1">
    <location>
        <position position="151"/>
    </location>
</feature>
<comment type="function">
    <text evidence="1">Catalyzes the complicated ring closure reaction between the two acyclic compounds 1-deoxy-D-xylulose-5-phosphate (DXP) and 3-amino-2-oxopropyl phosphate (1-amino-acetone-3-phosphate or AAP) to form pyridoxine 5'-phosphate (PNP) and inorganic phosphate.</text>
</comment>
<comment type="catalytic activity">
    <reaction evidence="1">
        <text>3-amino-2-oxopropyl phosphate + 1-deoxy-D-xylulose 5-phosphate = pyridoxine 5'-phosphate + phosphate + 2 H2O + H(+)</text>
        <dbReference type="Rhea" id="RHEA:15265"/>
        <dbReference type="ChEBI" id="CHEBI:15377"/>
        <dbReference type="ChEBI" id="CHEBI:15378"/>
        <dbReference type="ChEBI" id="CHEBI:43474"/>
        <dbReference type="ChEBI" id="CHEBI:57279"/>
        <dbReference type="ChEBI" id="CHEBI:57792"/>
        <dbReference type="ChEBI" id="CHEBI:58589"/>
        <dbReference type="EC" id="2.6.99.2"/>
    </reaction>
</comment>
<comment type="pathway">
    <text evidence="1">Cofactor biosynthesis; pyridoxine 5'-phosphate biosynthesis; pyridoxine 5'-phosphate from D-erythrose 4-phosphate: step 5/5.</text>
</comment>
<comment type="subunit">
    <text evidence="1">Homooctamer; tetramer of dimers.</text>
</comment>
<comment type="subcellular location">
    <subcellularLocation>
        <location evidence="1">Cytoplasm</location>
    </subcellularLocation>
</comment>
<comment type="similarity">
    <text evidence="1">Belongs to the PNP synthase family.</text>
</comment>
<organism>
    <name type="scientific">Coxiella burnetii (strain RSA 331 / Henzerling II)</name>
    <dbReference type="NCBI Taxonomy" id="360115"/>
    <lineage>
        <taxon>Bacteria</taxon>
        <taxon>Pseudomonadati</taxon>
        <taxon>Pseudomonadota</taxon>
        <taxon>Gammaproteobacteria</taxon>
        <taxon>Legionellales</taxon>
        <taxon>Coxiellaceae</taxon>
        <taxon>Coxiella</taxon>
    </lineage>
</organism>
<proteinExistence type="inferred from homology"/>
<name>PDXJ_COXBR</name>
<gene>
    <name evidence="1" type="primary">pdxJ</name>
    <name type="ordered locus">COXBURSA331_A1678</name>
</gene>